<gene>
    <name evidence="1" type="primary">hisI</name>
    <name type="ordered locus">Pnap_0702</name>
</gene>
<feature type="chain" id="PRO_0000319704" description="Phosphoribosyl-AMP cyclohydrolase">
    <location>
        <begin position="1"/>
        <end position="129"/>
    </location>
</feature>
<feature type="binding site" evidence="1">
    <location>
        <position position="76"/>
    </location>
    <ligand>
        <name>Mg(2+)</name>
        <dbReference type="ChEBI" id="CHEBI:18420"/>
    </ligand>
</feature>
<feature type="binding site" evidence="1">
    <location>
        <position position="77"/>
    </location>
    <ligand>
        <name>Zn(2+)</name>
        <dbReference type="ChEBI" id="CHEBI:29105"/>
        <note>ligand shared between dimeric partners</note>
    </ligand>
</feature>
<feature type="binding site" evidence="1">
    <location>
        <position position="78"/>
    </location>
    <ligand>
        <name>Mg(2+)</name>
        <dbReference type="ChEBI" id="CHEBI:18420"/>
    </ligand>
</feature>
<feature type="binding site" evidence="1">
    <location>
        <position position="80"/>
    </location>
    <ligand>
        <name>Mg(2+)</name>
        <dbReference type="ChEBI" id="CHEBI:18420"/>
    </ligand>
</feature>
<feature type="binding site" evidence="1">
    <location>
        <position position="97"/>
    </location>
    <ligand>
        <name>Zn(2+)</name>
        <dbReference type="ChEBI" id="CHEBI:29105"/>
        <note>ligand shared between dimeric partners</note>
    </ligand>
</feature>
<feature type="binding site" evidence="1">
    <location>
        <position position="104"/>
    </location>
    <ligand>
        <name>Zn(2+)</name>
        <dbReference type="ChEBI" id="CHEBI:29105"/>
        <note>ligand shared between dimeric partners</note>
    </ligand>
</feature>
<accession>A1VK43</accession>
<proteinExistence type="inferred from homology"/>
<evidence type="ECO:0000255" key="1">
    <source>
        <dbReference type="HAMAP-Rule" id="MF_01021"/>
    </source>
</evidence>
<protein>
    <recommendedName>
        <fullName evidence="1">Phosphoribosyl-AMP cyclohydrolase</fullName>
        <shortName evidence="1">PRA-CH</shortName>
        <ecNumber evidence="1">3.5.4.19</ecNumber>
    </recommendedName>
</protein>
<dbReference type="EC" id="3.5.4.19" evidence="1"/>
<dbReference type="EMBL" id="CP000529">
    <property type="protein sequence ID" value="ABM36021.1"/>
    <property type="molecule type" value="Genomic_DNA"/>
</dbReference>
<dbReference type="RefSeq" id="WP_011800116.1">
    <property type="nucleotide sequence ID" value="NC_008781.1"/>
</dbReference>
<dbReference type="SMR" id="A1VK43"/>
<dbReference type="STRING" id="365044.Pnap_0702"/>
<dbReference type="KEGG" id="pna:Pnap_0702"/>
<dbReference type="eggNOG" id="COG0139">
    <property type="taxonomic scope" value="Bacteria"/>
</dbReference>
<dbReference type="HOGENOM" id="CLU_048577_5_0_4"/>
<dbReference type="OrthoDB" id="9795769at2"/>
<dbReference type="UniPathway" id="UPA00031">
    <property type="reaction ID" value="UER00008"/>
</dbReference>
<dbReference type="Proteomes" id="UP000000644">
    <property type="component" value="Chromosome"/>
</dbReference>
<dbReference type="GO" id="GO:0005737">
    <property type="term" value="C:cytoplasm"/>
    <property type="evidence" value="ECO:0007669"/>
    <property type="project" value="UniProtKB-SubCell"/>
</dbReference>
<dbReference type="GO" id="GO:0000287">
    <property type="term" value="F:magnesium ion binding"/>
    <property type="evidence" value="ECO:0007669"/>
    <property type="project" value="UniProtKB-UniRule"/>
</dbReference>
<dbReference type="GO" id="GO:0004635">
    <property type="term" value="F:phosphoribosyl-AMP cyclohydrolase activity"/>
    <property type="evidence" value="ECO:0007669"/>
    <property type="project" value="UniProtKB-UniRule"/>
</dbReference>
<dbReference type="GO" id="GO:0008270">
    <property type="term" value="F:zinc ion binding"/>
    <property type="evidence" value="ECO:0007669"/>
    <property type="project" value="UniProtKB-UniRule"/>
</dbReference>
<dbReference type="GO" id="GO:0000105">
    <property type="term" value="P:L-histidine biosynthetic process"/>
    <property type="evidence" value="ECO:0007669"/>
    <property type="project" value="UniProtKB-UniRule"/>
</dbReference>
<dbReference type="FunFam" id="3.10.20.810:FF:000001">
    <property type="entry name" value="Histidine biosynthesis bifunctional protein HisIE"/>
    <property type="match status" value="1"/>
</dbReference>
<dbReference type="Gene3D" id="3.10.20.810">
    <property type="entry name" value="Phosphoribosyl-AMP cyclohydrolase"/>
    <property type="match status" value="1"/>
</dbReference>
<dbReference type="HAMAP" id="MF_01021">
    <property type="entry name" value="HisI"/>
    <property type="match status" value="1"/>
</dbReference>
<dbReference type="InterPro" id="IPR026660">
    <property type="entry name" value="PRA-CH"/>
</dbReference>
<dbReference type="InterPro" id="IPR002496">
    <property type="entry name" value="PRib_AMP_CycHydrolase_dom"/>
</dbReference>
<dbReference type="InterPro" id="IPR038019">
    <property type="entry name" value="PRib_AMP_CycHydrolase_sf"/>
</dbReference>
<dbReference type="NCBIfam" id="NF000768">
    <property type="entry name" value="PRK00051.1"/>
    <property type="match status" value="1"/>
</dbReference>
<dbReference type="PANTHER" id="PTHR42945">
    <property type="entry name" value="HISTIDINE BIOSYNTHESIS BIFUNCTIONAL PROTEIN"/>
    <property type="match status" value="1"/>
</dbReference>
<dbReference type="PANTHER" id="PTHR42945:SF1">
    <property type="entry name" value="HISTIDINE BIOSYNTHESIS BIFUNCTIONAL PROTEIN HIS7"/>
    <property type="match status" value="1"/>
</dbReference>
<dbReference type="Pfam" id="PF01502">
    <property type="entry name" value="PRA-CH"/>
    <property type="match status" value="1"/>
</dbReference>
<dbReference type="SUPFAM" id="SSF141734">
    <property type="entry name" value="HisI-like"/>
    <property type="match status" value="1"/>
</dbReference>
<keyword id="KW-0028">Amino-acid biosynthesis</keyword>
<keyword id="KW-0963">Cytoplasm</keyword>
<keyword id="KW-0368">Histidine biosynthesis</keyword>
<keyword id="KW-0378">Hydrolase</keyword>
<keyword id="KW-0460">Magnesium</keyword>
<keyword id="KW-0479">Metal-binding</keyword>
<keyword id="KW-1185">Reference proteome</keyword>
<keyword id="KW-0862">Zinc</keyword>
<name>HIS3_POLNA</name>
<comment type="function">
    <text evidence="1">Catalyzes the hydrolysis of the adenine ring of phosphoribosyl-AMP.</text>
</comment>
<comment type="catalytic activity">
    <reaction evidence="1">
        <text>1-(5-phospho-beta-D-ribosyl)-5'-AMP + H2O = 1-(5-phospho-beta-D-ribosyl)-5-[(5-phospho-beta-D-ribosylamino)methylideneamino]imidazole-4-carboxamide</text>
        <dbReference type="Rhea" id="RHEA:20049"/>
        <dbReference type="ChEBI" id="CHEBI:15377"/>
        <dbReference type="ChEBI" id="CHEBI:58435"/>
        <dbReference type="ChEBI" id="CHEBI:59457"/>
        <dbReference type="EC" id="3.5.4.19"/>
    </reaction>
</comment>
<comment type="cofactor">
    <cofactor evidence="1">
        <name>Mg(2+)</name>
        <dbReference type="ChEBI" id="CHEBI:18420"/>
    </cofactor>
    <text evidence="1">Binds 1 Mg(2+) ion per subunit.</text>
</comment>
<comment type="cofactor">
    <cofactor evidence="1">
        <name>Zn(2+)</name>
        <dbReference type="ChEBI" id="CHEBI:29105"/>
    </cofactor>
    <text evidence="1">Binds 1 zinc ion per subunit.</text>
</comment>
<comment type="pathway">
    <text evidence="1">Amino-acid biosynthesis; L-histidine biosynthesis; L-histidine from 5-phospho-alpha-D-ribose 1-diphosphate: step 3/9.</text>
</comment>
<comment type="subunit">
    <text evidence="1">Homodimer.</text>
</comment>
<comment type="subcellular location">
    <subcellularLocation>
        <location evidence="1">Cytoplasm</location>
    </subcellularLocation>
</comment>
<comment type="similarity">
    <text evidence="1">Belongs to the PRA-CH family.</text>
</comment>
<reference key="1">
    <citation type="journal article" date="2009" name="Environ. Microbiol.">
        <title>The genome of Polaromonas naphthalenivorans strain CJ2, isolated from coal tar-contaminated sediment, reveals physiological and metabolic versatility and evolution through extensive horizontal gene transfer.</title>
        <authorList>
            <person name="Yagi J.M."/>
            <person name="Sims D."/>
            <person name="Brettin T."/>
            <person name="Bruce D."/>
            <person name="Madsen E.L."/>
        </authorList>
    </citation>
    <scope>NUCLEOTIDE SEQUENCE [LARGE SCALE GENOMIC DNA]</scope>
    <source>
        <strain>CJ2</strain>
    </source>
</reference>
<organism>
    <name type="scientific">Polaromonas naphthalenivorans (strain CJ2)</name>
    <dbReference type="NCBI Taxonomy" id="365044"/>
    <lineage>
        <taxon>Bacteria</taxon>
        <taxon>Pseudomonadati</taxon>
        <taxon>Pseudomonadota</taxon>
        <taxon>Betaproteobacteria</taxon>
        <taxon>Burkholderiales</taxon>
        <taxon>Comamonadaceae</taxon>
        <taxon>Polaromonas</taxon>
    </lineage>
</organism>
<sequence>MNWLDTVRWDDKGLVPVIAQEAASGDVLMFAWMNREALQKTAELGQAVYFSRSRGRLWHKGEESGHLQTVHEIRLDCDSDVVLLKVTQLGHEPGIACHTGRHSCFFSLYKDGQWVATEPVLKDPASIYK</sequence>